<comment type="function">
    <text evidence="1">Catalyzes the irreversible transfer of a propylamine group from the amino donor S-adenosylmethioninamine (decarboxy-AdoMet) to putrescine (1,4-diaminobutane) to yield spermidine.</text>
</comment>
<comment type="catalytic activity">
    <reaction evidence="1">
        <text>S-adenosyl 3-(methylsulfanyl)propylamine + putrescine = S-methyl-5'-thioadenosine + spermidine + H(+)</text>
        <dbReference type="Rhea" id="RHEA:12721"/>
        <dbReference type="ChEBI" id="CHEBI:15378"/>
        <dbReference type="ChEBI" id="CHEBI:17509"/>
        <dbReference type="ChEBI" id="CHEBI:57443"/>
        <dbReference type="ChEBI" id="CHEBI:57834"/>
        <dbReference type="ChEBI" id="CHEBI:326268"/>
        <dbReference type="EC" id="2.5.1.16"/>
    </reaction>
</comment>
<comment type="pathway">
    <text evidence="1">Amine and polyamine biosynthesis; spermidine biosynthesis; spermidine from putrescine: step 1/1.</text>
</comment>
<comment type="subunit">
    <text evidence="1">Homodimer or homotetramer.</text>
</comment>
<comment type="subcellular location">
    <subcellularLocation>
        <location evidence="1">Cytoplasm</location>
    </subcellularLocation>
</comment>
<comment type="similarity">
    <text evidence="1">Belongs to the spermidine/spermine synthase family.</text>
</comment>
<organism>
    <name type="scientific">Shigella flexneri serotype 5b (strain 8401)</name>
    <dbReference type="NCBI Taxonomy" id="373384"/>
    <lineage>
        <taxon>Bacteria</taxon>
        <taxon>Pseudomonadati</taxon>
        <taxon>Pseudomonadota</taxon>
        <taxon>Gammaproteobacteria</taxon>
        <taxon>Enterobacterales</taxon>
        <taxon>Enterobacteriaceae</taxon>
        <taxon>Shigella</taxon>
    </lineage>
</organism>
<evidence type="ECO:0000255" key="1">
    <source>
        <dbReference type="HAMAP-Rule" id="MF_00198"/>
    </source>
</evidence>
<name>SPEE_SHIF8</name>
<gene>
    <name evidence="1" type="primary">speE</name>
    <name type="ordered locus">SFV_0112</name>
</gene>
<accession>Q0T879</accession>
<proteinExistence type="inferred from homology"/>
<dbReference type="EC" id="2.5.1.16" evidence="1"/>
<dbReference type="EMBL" id="CP000266">
    <property type="protein sequence ID" value="ABF02397.1"/>
    <property type="molecule type" value="Genomic_DNA"/>
</dbReference>
<dbReference type="RefSeq" id="WP_000818422.1">
    <property type="nucleotide sequence ID" value="NC_008258.1"/>
</dbReference>
<dbReference type="SMR" id="Q0T879"/>
<dbReference type="KEGG" id="sfv:SFV_0112"/>
<dbReference type="HOGENOM" id="CLU_048199_0_0_6"/>
<dbReference type="UniPathway" id="UPA00248">
    <property type="reaction ID" value="UER00314"/>
</dbReference>
<dbReference type="Proteomes" id="UP000000659">
    <property type="component" value="Chromosome"/>
</dbReference>
<dbReference type="GO" id="GO:0005829">
    <property type="term" value="C:cytosol"/>
    <property type="evidence" value="ECO:0007669"/>
    <property type="project" value="TreeGrafter"/>
</dbReference>
<dbReference type="GO" id="GO:0004766">
    <property type="term" value="F:spermidine synthase activity"/>
    <property type="evidence" value="ECO:0007669"/>
    <property type="project" value="UniProtKB-UniRule"/>
</dbReference>
<dbReference type="GO" id="GO:0008295">
    <property type="term" value="P:spermidine biosynthetic process"/>
    <property type="evidence" value="ECO:0007669"/>
    <property type="project" value="UniProtKB-UniRule"/>
</dbReference>
<dbReference type="CDD" id="cd02440">
    <property type="entry name" value="AdoMet_MTases"/>
    <property type="match status" value="1"/>
</dbReference>
<dbReference type="FunFam" id="2.30.140.10:FF:000002">
    <property type="entry name" value="Polyamine aminopropyltransferase"/>
    <property type="match status" value="1"/>
</dbReference>
<dbReference type="FunFam" id="3.40.50.150:FF:000026">
    <property type="entry name" value="Polyamine aminopropyltransferase"/>
    <property type="match status" value="1"/>
</dbReference>
<dbReference type="Gene3D" id="2.30.140.10">
    <property type="entry name" value="Spermidine synthase, tetramerisation domain"/>
    <property type="match status" value="1"/>
</dbReference>
<dbReference type="Gene3D" id="3.40.50.150">
    <property type="entry name" value="Vaccinia Virus protein VP39"/>
    <property type="match status" value="1"/>
</dbReference>
<dbReference type="HAMAP" id="MF_00198">
    <property type="entry name" value="Spermidine_synth"/>
    <property type="match status" value="1"/>
</dbReference>
<dbReference type="InterPro" id="IPR030374">
    <property type="entry name" value="PABS"/>
</dbReference>
<dbReference type="InterPro" id="IPR030373">
    <property type="entry name" value="PABS_CS"/>
</dbReference>
<dbReference type="InterPro" id="IPR029063">
    <property type="entry name" value="SAM-dependent_MTases_sf"/>
</dbReference>
<dbReference type="InterPro" id="IPR001045">
    <property type="entry name" value="Spermi_synthase"/>
</dbReference>
<dbReference type="InterPro" id="IPR035246">
    <property type="entry name" value="Spermidine_synt_N"/>
</dbReference>
<dbReference type="InterPro" id="IPR037163">
    <property type="entry name" value="Spermidine_synt_N_sf"/>
</dbReference>
<dbReference type="NCBIfam" id="NF037959">
    <property type="entry name" value="MFS_SpdSyn"/>
    <property type="match status" value="1"/>
</dbReference>
<dbReference type="NCBIfam" id="NF002010">
    <property type="entry name" value="PRK00811.1"/>
    <property type="match status" value="1"/>
</dbReference>
<dbReference type="NCBIfam" id="TIGR00417">
    <property type="entry name" value="speE"/>
    <property type="match status" value="1"/>
</dbReference>
<dbReference type="PANTHER" id="PTHR11558:SF11">
    <property type="entry name" value="SPERMIDINE SYNTHASE"/>
    <property type="match status" value="1"/>
</dbReference>
<dbReference type="PANTHER" id="PTHR11558">
    <property type="entry name" value="SPERMIDINE/SPERMINE SYNTHASE"/>
    <property type="match status" value="1"/>
</dbReference>
<dbReference type="Pfam" id="PF17284">
    <property type="entry name" value="Spermine_synt_N"/>
    <property type="match status" value="1"/>
</dbReference>
<dbReference type="Pfam" id="PF01564">
    <property type="entry name" value="Spermine_synth"/>
    <property type="match status" value="1"/>
</dbReference>
<dbReference type="SUPFAM" id="SSF53335">
    <property type="entry name" value="S-adenosyl-L-methionine-dependent methyltransferases"/>
    <property type="match status" value="1"/>
</dbReference>
<dbReference type="PROSITE" id="PS01330">
    <property type="entry name" value="PABS_1"/>
    <property type="match status" value="1"/>
</dbReference>
<dbReference type="PROSITE" id="PS51006">
    <property type="entry name" value="PABS_2"/>
    <property type="match status" value="1"/>
</dbReference>
<sequence>MAEKKQWHETLHDQFGQYFAVDNVLYHEKTDHQDLIIFENAAFGRVMALDGVVQTTERDEFIYHEMMTHVPLLAHGHAKHVLIIGGGDGAMLREVTRHKNVESITMVEIDAGVVSFCRQYLPNHNAGSYDDPRFQLVIDDGVNFVNQTSQTFDVIISDCTDPIGPGESLFTSAFYEGCKRCLNPGGIFVAQNGVCFLQQEEAIDSHRKLSHYFSDVGFYQAAIPTYYGGIMTFAWATDNDALRHLSTEIIQARFLASGLKCRYYNPAIHTAAFALPQYLQDALASQPS</sequence>
<protein>
    <recommendedName>
        <fullName evidence="1">Polyamine aminopropyltransferase</fullName>
    </recommendedName>
    <alternativeName>
        <fullName evidence="1">Putrescine aminopropyltransferase</fullName>
        <shortName evidence="1">PAPT</shortName>
    </alternativeName>
    <alternativeName>
        <fullName evidence="1">Spermidine synthase</fullName>
        <shortName evidence="1">SPDS</shortName>
        <shortName evidence="1">SPDSY</shortName>
        <ecNumber evidence="1">2.5.1.16</ecNumber>
    </alternativeName>
</protein>
<reference key="1">
    <citation type="journal article" date="2006" name="BMC Genomics">
        <title>Complete genome sequence of Shigella flexneri 5b and comparison with Shigella flexneri 2a.</title>
        <authorList>
            <person name="Nie H."/>
            <person name="Yang F."/>
            <person name="Zhang X."/>
            <person name="Yang J."/>
            <person name="Chen L."/>
            <person name="Wang J."/>
            <person name="Xiong Z."/>
            <person name="Peng J."/>
            <person name="Sun L."/>
            <person name="Dong J."/>
            <person name="Xue Y."/>
            <person name="Xu X."/>
            <person name="Chen S."/>
            <person name="Yao Z."/>
            <person name="Shen Y."/>
            <person name="Jin Q."/>
        </authorList>
    </citation>
    <scope>NUCLEOTIDE SEQUENCE [LARGE SCALE GENOMIC DNA]</scope>
    <source>
        <strain>8401</strain>
    </source>
</reference>
<keyword id="KW-0963">Cytoplasm</keyword>
<keyword id="KW-0620">Polyamine biosynthesis</keyword>
<keyword id="KW-0745">Spermidine biosynthesis</keyword>
<keyword id="KW-0808">Transferase</keyword>
<feature type="chain" id="PRO_1000012019" description="Polyamine aminopropyltransferase">
    <location>
        <begin position="1"/>
        <end position="288"/>
    </location>
</feature>
<feature type="domain" description="PABS" evidence="1">
    <location>
        <begin position="9"/>
        <end position="238"/>
    </location>
</feature>
<feature type="active site" description="Proton acceptor" evidence="1">
    <location>
        <position position="158"/>
    </location>
</feature>
<feature type="binding site" evidence="1">
    <location>
        <position position="33"/>
    </location>
    <ligand>
        <name>S-methyl-5'-thioadenosine</name>
        <dbReference type="ChEBI" id="CHEBI:17509"/>
    </ligand>
</feature>
<feature type="binding site" evidence="1">
    <location>
        <position position="64"/>
    </location>
    <ligand>
        <name>spermidine</name>
        <dbReference type="ChEBI" id="CHEBI:57834"/>
    </ligand>
</feature>
<feature type="binding site" evidence="1">
    <location>
        <position position="88"/>
    </location>
    <ligand>
        <name>spermidine</name>
        <dbReference type="ChEBI" id="CHEBI:57834"/>
    </ligand>
</feature>
<feature type="binding site" evidence="1">
    <location>
        <position position="108"/>
    </location>
    <ligand>
        <name>S-methyl-5'-thioadenosine</name>
        <dbReference type="ChEBI" id="CHEBI:17509"/>
    </ligand>
</feature>
<feature type="binding site" evidence="1">
    <location>
        <begin position="140"/>
        <end position="141"/>
    </location>
    <ligand>
        <name>S-methyl-5'-thioadenosine</name>
        <dbReference type="ChEBI" id="CHEBI:17509"/>
    </ligand>
</feature>
<feature type="binding site" evidence="1">
    <location>
        <begin position="158"/>
        <end position="161"/>
    </location>
    <ligand>
        <name>spermidine</name>
        <dbReference type="ChEBI" id="CHEBI:57834"/>
    </ligand>
</feature>
<feature type="binding site" evidence="1">
    <location>
        <position position="165"/>
    </location>
    <ligand>
        <name>S-methyl-5'-thioadenosine</name>
        <dbReference type="ChEBI" id="CHEBI:17509"/>
    </ligand>
</feature>